<dbReference type="EC" id="4.3.3.6" evidence="1"/>
<dbReference type="EC" id="3.5.1.2" evidence="1"/>
<dbReference type="EMBL" id="CP000562">
    <property type="protein sequence ID" value="ABN55945.1"/>
    <property type="molecule type" value="Genomic_DNA"/>
</dbReference>
<dbReference type="RefSeq" id="WP_011842866.1">
    <property type="nucleotide sequence ID" value="NC_009051.1"/>
</dbReference>
<dbReference type="SMR" id="A3CRE5"/>
<dbReference type="STRING" id="368407.Memar_0010"/>
<dbReference type="GeneID" id="4847746"/>
<dbReference type="GeneID" id="76730593"/>
<dbReference type="KEGG" id="mem:Memar_0010"/>
<dbReference type="eggNOG" id="arCOG00034">
    <property type="taxonomic scope" value="Archaea"/>
</dbReference>
<dbReference type="HOGENOM" id="CLU_069674_2_0_2"/>
<dbReference type="OrthoDB" id="26717at2157"/>
<dbReference type="UniPathway" id="UPA00245"/>
<dbReference type="Proteomes" id="UP000002146">
    <property type="component" value="Chromosome"/>
</dbReference>
<dbReference type="GO" id="GO:0005829">
    <property type="term" value="C:cytosol"/>
    <property type="evidence" value="ECO:0007669"/>
    <property type="project" value="TreeGrafter"/>
</dbReference>
<dbReference type="GO" id="GO:1903600">
    <property type="term" value="C:glutaminase complex"/>
    <property type="evidence" value="ECO:0007669"/>
    <property type="project" value="TreeGrafter"/>
</dbReference>
<dbReference type="GO" id="GO:0004359">
    <property type="term" value="F:glutaminase activity"/>
    <property type="evidence" value="ECO:0007669"/>
    <property type="project" value="UniProtKB-UniRule"/>
</dbReference>
<dbReference type="GO" id="GO:0036381">
    <property type="term" value="F:pyridoxal 5'-phosphate synthase (glutamine hydrolysing) activity"/>
    <property type="evidence" value="ECO:0007669"/>
    <property type="project" value="UniProtKB-UniRule"/>
</dbReference>
<dbReference type="GO" id="GO:0006543">
    <property type="term" value="P:glutamine catabolic process"/>
    <property type="evidence" value="ECO:0007669"/>
    <property type="project" value="UniProtKB-UniRule"/>
</dbReference>
<dbReference type="GO" id="GO:0042823">
    <property type="term" value="P:pyridoxal phosphate biosynthetic process"/>
    <property type="evidence" value="ECO:0007669"/>
    <property type="project" value="UniProtKB-UniRule"/>
</dbReference>
<dbReference type="GO" id="GO:0008614">
    <property type="term" value="P:pyridoxine metabolic process"/>
    <property type="evidence" value="ECO:0007669"/>
    <property type="project" value="TreeGrafter"/>
</dbReference>
<dbReference type="CDD" id="cd01749">
    <property type="entry name" value="GATase1_PB"/>
    <property type="match status" value="1"/>
</dbReference>
<dbReference type="FunFam" id="3.40.50.880:FF:000010">
    <property type="entry name" value="uncharacterized protein LOC100176842 isoform X2"/>
    <property type="match status" value="1"/>
</dbReference>
<dbReference type="Gene3D" id="3.40.50.880">
    <property type="match status" value="1"/>
</dbReference>
<dbReference type="HAMAP" id="MF_01615">
    <property type="entry name" value="PdxT"/>
    <property type="match status" value="1"/>
</dbReference>
<dbReference type="InterPro" id="IPR029062">
    <property type="entry name" value="Class_I_gatase-like"/>
</dbReference>
<dbReference type="InterPro" id="IPR002161">
    <property type="entry name" value="PdxT/SNO"/>
</dbReference>
<dbReference type="InterPro" id="IPR021196">
    <property type="entry name" value="PdxT/SNO_CS"/>
</dbReference>
<dbReference type="NCBIfam" id="TIGR03800">
    <property type="entry name" value="PLP_synth_Pdx2"/>
    <property type="match status" value="1"/>
</dbReference>
<dbReference type="PANTHER" id="PTHR31559">
    <property type="entry name" value="PYRIDOXAL 5'-PHOSPHATE SYNTHASE SUBUNIT SNO"/>
    <property type="match status" value="1"/>
</dbReference>
<dbReference type="PANTHER" id="PTHR31559:SF0">
    <property type="entry name" value="PYRIDOXAL 5'-PHOSPHATE SYNTHASE SUBUNIT SNO1-RELATED"/>
    <property type="match status" value="1"/>
</dbReference>
<dbReference type="Pfam" id="PF01174">
    <property type="entry name" value="SNO"/>
    <property type="match status" value="1"/>
</dbReference>
<dbReference type="PIRSF" id="PIRSF005639">
    <property type="entry name" value="Glut_amidoT_SNO"/>
    <property type="match status" value="1"/>
</dbReference>
<dbReference type="SUPFAM" id="SSF52317">
    <property type="entry name" value="Class I glutamine amidotransferase-like"/>
    <property type="match status" value="1"/>
</dbReference>
<dbReference type="PROSITE" id="PS01236">
    <property type="entry name" value="PDXT_SNO_1"/>
    <property type="match status" value="1"/>
</dbReference>
<dbReference type="PROSITE" id="PS51130">
    <property type="entry name" value="PDXT_SNO_2"/>
    <property type="match status" value="1"/>
</dbReference>
<evidence type="ECO:0000255" key="1">
    <source>
        <dbReference type="HAMAP-Rule" id="MF_01615"/>
    </source>
</evidence>
<keyword id="KW-0315">Glutamine amidotransferase</keyword>
<keyword id="KW-0378">Hydrolase</keyword>
<keyword id="KW-0456">Lyase</keyword>
<keyword id="KW-0663">Pyridoxal phosphate</keyword>
<protein>
    <recommendedName>
        <fullName evidence="1">Pyridoxal 5'-phosphate synthase subunit PdxT</fullName>
        <ecNumber evidence="1">4.3.3.6</ecNumber>
    </recommendedName>
    <alternativeName>
        <fullName evidence="1">Pdx2</fullName>
    </alternativeName>
    <alternativeName>
        <fullName evidence="1">Pyridoxal 5'-phosphate synthase glutaminase subunit</fullName>
        <ecNumber evidence="1">3.5.1.2</ecNumber>
    </alternativeName>
</protein>
<accession>A3CRE5</accession>
<comment type="function">
    <text evidence="1">Catalyzes the hydrolysis of glutamine to glutamate and ammonia as part of the biosynthesis of pyridoxal 5'-phosphate. The resulting ammonia molecule is channeled to the active site of PdxS.</text>
</comment>
<comment type="catalytic activity">
    <reaction evidence="1">
        <text>aldehydo-D-ribose 5-phosphate + D-glyceraldehyde 3-phosphate + L-glutamine = pyridoxal 5'-phosphate + L-glutamate + phosphate + 3 H2O + H(+)</text>
        <dbReference type="Rhea" id="RHEA:31507"/>
        <dbReference type="ChEBI" id="CHEBI:15377"/>
        <dbReference type="ChEBI" id="CHEBI:15378"/>
        <dbReference type="ChEBI" id="CHEBI:29985"/>
        <dbReference type="ChEBI" id="CHEBI:43474"/>
        <dbReference type="ChEBI" id="CHEBI:58273"/>
        <dbReference type="ChEBI" id="CHEBI:58359"/>
        <dbReference type="ChEBI" id="CHEBI:59776"/>
        <dbReference type="ChEBI" id="CHEBI:597326"/>
        <dbReference type="EC" id="4.3.3.6"/>
    </reaction>
</comment>
<comment type="catalytic activity">
    <reaction evidence="1">
        <text>L-glutamine + H2O = L-glutamate + NH4(+)</text>
        <dbReference type="Rhea" id="RHEA:15889"/>
        <dbReference type="ChEBI" id="CHEBI:15377"/>
        <dbReference type="ChEBI" id="CHEBI:28938"/>
        <dbReference type="ChEBI" id="CHEBI:29985"/>
        <dbReference type="ChEBI" id="CHEBI:58359"/>
        <dbReference type="EC" id="3.5.1.2"/>
    </reaction>
</comment>
<comment type="pathway">
    <text evidence="1">Cofactor biosynthesis; pyridoxal 5'-phosphate biosynthesis.</text>
</comment>
<comment type="subunit">
    <text evidence="1">In the presence of PdxS, forms a dodecamer of heterodimers. Only shows activity in the heterodimer.</text>
</comment>
<comment type="similarity">
    <text evidence="1">Belongs to the glutaminase PdxT/SNO family.</text>
</comment>
<gene>
    <name evidence="1" type="primary">pdxT</name>
    <name type="ordered locus">Memar_0010</name>
</gene>
<reference key="1">
    <citation type="journal article" date="2009" name="Stand. Genomic Sci.">
        <title>Complete genome sequence of Methanoculleus marisnigri Romesser et al. 1981 type strain JR1.</title>
        <authorList>
            <person name="Anderson I.J."/>
            <person name="Sieprawska-Lupa M."/>
            <person name="Lapidus A."/>
            <person name="Nolan M."/>
            <person name="Copeland A."/>
            <person name="Glavina Del Rio T."/>
            <person name="Tice H."/>
            <person name="Dalin E."/>
            <person name="Barry K."/>
            <person name="Saunders E."/>
            <person name="Han C."/>
            <person name="Brettin T."/>
            <person name="Detter J.C."/>
            <person name="Bruce D."/>
            <person name="Mikhailova N."/>
            <person name="Pitluck S."/>
            <person name="Hauser L."/>
            <person name="Land M."/>
            <person name="Lucas S."/>
            <person name="Richardson P."/>
            <person name="Whitman W.B."/>
            <person name="Kyrpides N.C."/>
        </authorList>
    </citation>
    <scope>NUCLEOTIDE SEQUENCE [LARGE SCALE GENOMIC DNA]</scope>
    <source>
        <strain>ATCC 35101 / DSM 1498 / JR1</strain>
    </source>
</reference>
<organism>
    <name type="scientific">Methanoculleus marisnigri (strain ATCC 35101 / DSM 1498 / JR1)</name>
    <dbReference type="NCBI Taxonomy" id="368407"/>
    <lineage>
        <taxon>Archaea</taxon>
        <taxon>Methanobacteriati</taxon>
        <taxon>Methanobacteriota</taxon>
        <taxon>Stenosarchaea group</taxon>
        <taxon>Methanomicrobia</taxon>
        <taxon>Methanomicrobiales</taxon>
        <taxon>Methanomicrobiaceae</taxon>
        <taxon>Methanoculleus</taxon>
    </lineage>
</organism>
<sequence length="192" mass="20498">MGVKVGVLALQGDVAEHIAAFREALAERPGSSVAPIRRAEDLADLDALAIPGGESTTISRLMGKNGLYEPVAEFEGGVFATCAGMVLSADRVDDPRVRPLSLIPMHVARNAFGRQVDSRETMLEVAGLAEPFRAVFIRAPVATEAGDGVEVLARIPEGIVAVRHGRHMAFAFHPELGGDLRLHRVFLEGLEV</sequence>
<feature type="chain" id="PRO_0000293019" description="Pyridoxal 5'-phosphate synthase subunit PdxT">
    <location>
        <begin position="1"/>
        <end position="192"/>
    </location>
</feature>
<feature type="active site" description="Nucleophile" evidence="1">
    <location>
        <position position="82"/>
    </location>
</feature>
<feature type="active site" description="Charge relay system" evidence="1">
    <location>
        <position position="173"/>
    </location>
</feature>
<feature type="active site" description="Charge relay system" evidence="1">
    <location>
        <position position="175"/>
    </location>
</feature>
<feature type="binding site" evidence="1">
    <location>
        <begin position="53"/>
        <end position="55"/>
    </location>
    <ligand>
        <name>L-glutamine</name>
        <dbReference type="ChEBI" id="CHEBI:58359"/>
    </ligand>
</feature>
<feature type="binding site" evidence="1">
    <location>
        <position position="109"/>
    </location>
    <ligand>
        <name>L-glutamine</name>
        <dbReference type="ChEBI" id="CHEBI:58359"/>
    </ligand>
</feature>
<feature type="binding site" evidence="1">
    <location>
        <begin position="137"/>
        <end position="138"/>
    </location>
    <ligand>
        <name>L-glutamine</name>
        <dbReference type="ChEBI" id="CHEBI:58359"/>
    </ligand>
</feature>
<proteinExistence type="inferred from homology"/>
<name>PDXT_METMJ</name>